<keyword id="KW-0053">Apoptosis</keyword>
<keyword id="KW-0121">Carboxypeptidase</keyword>
<keyword id="KW-0325">Glycoprotein</keyword>
<keyword id="KW-0333">Golgi apparatus</keyword>
<keyword id="KW-0378">Hydrolase</keyword>
<keyword id="KW-0472">Membrane</keyword>
<keyword id="KW-0645">Protease</keyword>
<keyword id="KW-1185">Reference proteome</keyword>
<keyword id="KW-0732">Signal</keyword>
<keyword id="KW-0812">Transmembrane</keyword>
<keyword id="KW-1133">Transmembrane helix</keyword>
<dbReference type="EC" id="3.4.16.6"/>
<dbReference type="EMBL" id="CH981533">
    <property type="protein sequence ID" value="EDK47259.1"/>
    <property type="molecule type" value="Genomic_DNA"/>
</dbReference>
<dbReference type="RefSeq" id="XP_001523214.1">
    <property type="nucleotide sequence ID" value="XM_001523164.1"/>
</dbReference>
<dbReference type="SMR" id="A5E751"/>
<dbReference type="FunCoup" id="A5E751">
    <property type="interactions" value="113"/>
</dbReference>
<dbReference type="STRING" id="379508.A5E751"/>
<dbReference type="ESTHER" id="lodel-kex1">
    <property type="family name" value="Carboxypeptidase_S10"/>
</dbReference>
<dbReference type="MEROPS" id="S10.007"/>
<dbReference type="GlyCosmos" id="A5E751">
    <property type="glycosylation" value="4 sites, No reported glycans"/>
</dbReference>
<dbReference type="GeneID" id="5230460"/>
<dbReference type="KEGG" id="lel:PVL30_004980"/>
<dbReference type="VEuPathDB" id="FungiDB:LELG_05440"/>
<dbReference type="eggNOG" id="KOG1282">
    <property type="taxonomic scope" value="Eukaryota"/>
</dbReference>
<dbReference type="HOGENOM" id="CLU_008523_11_2_1"/>
<dbReference type="InParanoid" id="A5E751"/>
<dbReference type="OMA" id="PLMFAGQ"/>
<dbReference type="OrthoDB" id="443318at2759"/>
<dbReference type="Proteomes" id="UP000001996">
    <property type="component" value="Unassembled WGS sequence"/>
</dbReference>
<dbReference type="GO" id="GO:0016020">
    <property type="term" value="C:membrane"/>
    <property type="evidence" value="ECO:0007669"/>
    <property type="project" value="UniProtKB-KW"/>
</dbReference>
<dbReference type="GO" id="GO:0005802">
    <property type="term" value="C:trans-Golgi network"/>
    <property type="evidence" value="ECO:0007669"/>
    <property type="project" value="TreeGrafter"/>
</dbReference>
<dbReference type="GO" id="GO:0004185">
    <property type="term" value="F:serine-type carboxypeptidase activity"/>
    <property type="evidence" value="ECO:0007669"/>
    <property type="project" value="UniProtKB-EC"/>
</dbReference>
<dbReference type="GO" id="GO:0006915">
    <property type="term" value="P:apoptotic process"/>
    <property type="evidence" value="ECO:0007669"/>
    <property type="project" value="UniProtKB-KW"/>
</dbReference>
<dbReference type="GO" id="GO:0006508">
    <property type="term" value="P:proteolysis"/>
    <property type="evidence" value="ECO:0007669"/>
    <property type="project" value="UniProtKB-KW"/>
</dbReference>
<dbReference type="Gene3D" id="3.40.50.1820">
    <property type="entry name" value="alpha/beta hydrolase"/>
    <property type="match status" value="1"/>
</dbReference>
<dbReference type="InterPro" id="IPR029058">
    <property type="entry name" value="AB_hydrolase_fold"/>
</dbReference>
<dbReference type="InterPro" id="IPR001563">
    <property type="entry name" value="Peptidase_S10"/>
</dbReference>
<dbReference type="InterPro" id="IPR033124">
    <property type="entry name" value="Ser_caboxypep_his_AS"/>
</dbReference>
<dbReference type="PANTHER" id="PTHR11802:SF190">
    <property type="entry name" value="PHEROMONE-PROCESSING CARBOXYPEPTIDASE KEX1"/>
    <property type="match status" value="1"/>
</dbReference>
<dbReference type="PANTHER" id="PTHR11802">
    <property type="entry name" value="SERINE PROTEASE FAMILY S10 SERINE CARBOXYPEPTIDASE"/>
    <property type="match status" value="1"/>
</dbReference>
<dbReference type="Pfam" id="PF00450">
    <property type="entry name" value="Peptidase_S10"/>
    <property type="match status" value="1"/>
</dbReference>
<dbReference type="PRINTS" id="PR00724">
    <property type="entry name" value="CRBOXYPTASEC"/>
</dbReference>
<dbReference type="SUPFAM" id="SSF53474">
    <property type="entry name" value="alpha/beta-Hydrolases"/>
    <property type="match status" value="1"/>
</dbReference>
<dbReference type="PROSITE" id="PS00560">
    <property type="entry name" value="CARBOXYPEPT_SER_HIS"/>
    <property type="match status" value="1"/>
</dbReference>
<accession>A5E751</accession>
<protein>
    <recommendedName>
        <fullName>Pheromone-processing carboxypeptidase KEX1</fullName>
        <ecNumber>3.4.16.6</ecNumber>
    </recommendedName>
    <alternativeName>
        <fullName>Carboxypeptidase D</fullName>
    </alternativeName>
</protein>
<feature type="signal peptide" evidence="2">
    <location>
        <begin position="1"/>
        <end position="19"/>
    </location>
</feature>
<feature type="chain" id="PRO_0000411924" description="Pheromone-processing carboxypeptidase KEX1">
    <location>
        <begin position="20"/>
        <end position="702"/>
    </location>
</feature>
<feature type="topological domain" description="Lumenal" evidence="2">
    <location>
        <begin position="20"/>
        <end position="554"/>
    </location>
</feature>
<feature type="transmembrane region" description="Helical" evidence="2">
    <location>
        <begin position="555"/>
        <end position="575"/>
    </location>
</feature>
<feature type="topological domain" description="Cytoplasmic" evidence="2">
    <location>
        <begin position="576"/>
        <end position="702"/>
    </location>
</feature>
<feature type="region of interest" description="Disordered" evidence="4">
    <location>
        <begin position="501"/>
        <end position="547"/>
    </location>
</feature>
<feature type="region of interest" description="Disordered" evidence="4">
    <location>
        <begin position="663"/>
        <end position="702"/>
    </location>
</feature>
<feature type="compositionally biased region" description="Low complexity" evidence="4">
    <location>
        <begin position="511"/>
        <end position="538"/>
    </location>
</feature>
<feature type="compositionally biased region" description="Low complexity" evidence="4">
    <location>
        <begin position="686"/>
        <end position="702"/>
    </location>
</feature>
<feature type="active site" evidence="3">
    <location>
        <position position="188"/>
    </location>
</feature>
<feature type="active site" evidence="3">
    <location>
        <position position="399"/>
    </location>
</feature>
<feature type="active site" evidence="3">
    <location>
        <position position="457"/>
    </location>
</feature>
<feature type="glycosylation site" description="N-linked (GlcNAc...) asparagine" evidence="2">
    <location>
        <position position="65"/>
    </location>
</feature>
<feature type="glycosylation site" description="N-linked (GlcNAc...) asparagine" evidence="2">
    <location>
        <position position="124"/>
    </location>
</feature>
<feature type="glycosylation site" description="N-linked (GlcNAc...) asparagine" evidence="2">
    <location>
        <position position="446"/>
    </location>
</feature>
<feature type="glycosylation site" description="N-linked (GlcNAc...) asparagine" evidence="2">
    <location>
        <position position="454"/>
    </location>
</feature>
<name>KEX1_LODEL</name>
<comment type="function">
    <text evidence="1">Protease with a carboxypeptidase B-like function involved in the C-terminal processing of the lysine and arginine residues from protein precursors. Promotes cell fusion and is involved in the programmed cell death (By similarity).</text>
</comment>
<comment type="catalytic activity">
    <reaction>
        <text>Preferential release of a C-terminal arginine or lysine residue.</text>
        <dbReference type="EC" id="3.4.16.6"/>
    </reaction>
</comment>
<comment type="subcellular location">
    <subcellularLocation>
        <location evidence="1">Golgi apparatus</location>
        <location evidence="1">trans-Golgi network membrane</location>
        <topology evidence="1">Single-pass type I membrane protein</topology>
    </subcellularLocation>
</comment>
<comment type="similarity">
    <text evidence="5">Belongs to the peptidase S10 family.</text>
</comment>
<evidence type="ECO:0000250" key="1"/>
<evidence type="ECO:0000255" key="2"/>
<evidence type="ECO:0000255" key="3">
    <source>
        <dbReference type="PROSITE-ProRule" id="PRU10075"/>
    </source>
</evidence>
<evidence type="ECO:0000256" key="4">
    <source>
        <dbReference type="SAM" id="MobiDB-lite"/>
    </source>
</evidence>
<evidence type="ECO:0000305" key="5"/>
<organism>
    <name type="scientific">Lodderomyces elongisporus (strain ATCC 11503 / CBS 2605 / JCM 1781 / NBRC 1676 / NRRL YB-4239)</name>
    <name type="common">Yeast</name>
    <name type="synonym">Saccharomyces elongisporus</name>
    <dbReference type="NCBI Taxonomy" id="379508"/>
    <lineage>
        <taxon>Eukaryota</taxon>
        <taxon>Fungi</taxon>
        <taxon>Dikarya</taxon>
        <taxon>Ascomycota</taxon>
        <taxon>Saccharomycotina</taxon>
        <taxon>Pichiomycetes</taxon>
        <taxon>Debaryomycetaceae</taxon>
        <taxon>Candida/Lodderomyces clade</taxon>
        <taxon>Lodderomyces</taxon>
    </lineage>
</organism>
<proteinExistence type="inferred from homology"/>
<sequence>MLISSIYTICLFIITSVLAIPPKEGSDSDPAKQYLVTDLPGLHENIDDDFKPIMYAGQVELFPENNTMYFFWKFTDPKKSTDSAYSKRSIFWLNGGPGCSSMDGALLETGPFRINQDEKVVMNNGSWHKAGDVVYVDQPAGTGFSYTDQGKWLHDLPDMAFYFLKFMEKYYEIYPEEIDNDIYFAGESYAGQYIPYIADAILKRNAKLEEGQKKYNLKSLLIGNGWVSPNEQSLSYLPFFIENKLIDKENPRWMELLGDHEKCQRIVDGIDSKFDDKELNPAELDSNLCEGILTKLLSATVNGDGADDDQRCINMYDFTLRDSWPGCGINWPFELKYVTPFLRNDEVKHDLNLRVMKTWRECSGRVGRNFNAQHSFPSVHLLPDLLKQVPIILFSGMNDIICNSKGTLQYVLKLNWNGRKGFENPDAKLDWIHDDKKVGYVIQERNLTFIDIYNSSHMVPYDLPEVSRALLEIATNNYDIRDVDETNQNLVTYPLGVQKKGKIEVNPPSTPSSNDDSTTSETSDSQPDTVSSAGTSAEAETETEAEPTVNKVARLIQLAVILIVIWGLYLLYASWRARPSPIMKKNGGNGRKKNVQWADQLSRFEEEADASQLKGFFAKTMDRFRTTEGQGSYARAQSDDYIDDIELGEGIGETQLDDFIIGSDDEREGELEQPTHKSGNMDTDTNKNMKNSSNESKNKNTV</sequence>
<gene>
    <name type="primary">KEX1</name>
    <name type="ORF">LELG_05440</name>
</gene>
<reference key="1">
    <citation type="journal article" date="2009" name="Nature">
        <title>Evolution of pathogenicity and sexual reproduction in eight Candida genomes.</title>
        <authorList>
            <person name="Butler G."/>
            <person name="Rasmussen M.D."/>
            <person name="Lin M.F."/>
            <person name="Santos M.A.S."/>
            <person name="Sakthikumar S."/>
            <person name="Munro C.A."/>
            <person name="Rheinbay E."/>
            <person name="Grabherr M."/>
            <person name="Forche A."/>
            <person name="Reedy J.L."/>
            <person name="Agrafioti I."/>
            <person name="Arnaud M.B."/>
            <person name="Bates S."/>
            <person name="Brown A.J.P."/>
            <person name="Brunke S."/>
            <person name="Costanzo M.C."/>
            <person name="Fitzpatrick D.A."/>
            <person name="de Groot P.W.J."/>
            <person name="Harris D."/>
            <person name="Hoyer L.L."/>
            <person name="Hube B."/>
            <person name="Klis F.M."/>
            <person name="Kodira C."/>
            <person name="Lennard N."/>
            <person name="Logue M.E."/>
            <person name="Martin R."/>
            <person name="Neiman A.M."/>
            <person name="Nikolaou E."/>
            <person name="Quail M.A."/>
            <person name="Quinn J."/>
            <person name="Santos M.C."/>
            <person name="Schmitzberger F.F."/>
            <person name="Sherlock G."/>
            <person name="Shah P."/>
            <person name="Silverstein K.A.T."/>
            <person name="Skrzypek M.S."/>
            <person name="Soll D."/>
            <person name="Staggs R."/>
            <person name="Stansfield I."/>
            <person name="Stumpf M.P.H."/>
            <person name="Sudbery P.E."/>
            <person name="Srikantha T."/>
            <person name="Zeng Q."/>
            <person name="Berman J."/>
            <person name="Berriman M."/>
            <person name="Heitman J."/>
            <person name="Gow N.A.R."/>
            <person name="Lorenz M.C."/>
            <person name="Birren B.W."/>
            <person name="Kellis M."/>
            <person name="Cuomo C.A."/>
        </authorList>
    </citation>
    <scope>NUCLEOTIDE SEQUENCE [LARGE SCALE GENOMIC DNA]</scope>
    <source>
        <strain>ATCC 11503 / BCRC 21390 / CBS 2605 / JCM 1781 / NBRC 1676 / NRRL YB-4239</strain>
    </source>
</reference>